<dbReference type="EMBL" id="AJ250429">
    <property type="protein sequence ID" value="CAB59831.1"/>
    <property type="status" value="ALT_INIT"/>
    <property type="molecule type" value="mRNA"/>
</dbReference>
<dbReference type="EMBL" id="AF200495">
    <property type="protein sequence ID" value="AAF69251.1"/>
    <property type="molecule type" value="mRNA"/>
</dbReference>
<dbReference type="EMBL" id="AF230378">
    <property type="protein sequence ID" value="AAF91275.1"/>
    <property type="molecule type" value="mRNA"/>
</dbReference>
<dbReference type="EMBL" id="AK008977">
    <property type="protein sequence ID" value="BAB26002.1"/>
    <property type="molecule type" value="mRNA"/>
</dbReference>
<dbReference type="EMBL" id="AK009741">
    <property type="protein sequence ID" value="BAB26471.1"/>
    <property type="molecule type" value="mRNA"/>
</dbReference>
<dbReference type="CCDS" id="CCDS50519.1"/>
<dbReference type="RefSeq" id="NP_001139559.1">
    <property type="nucleotide sequence ID" value="NM_001146087.2"/>
</dbReference>
<dbReference type="RefSeq" id="NP_001139560.1">
    <property type="nucleotide sequence ID" value="NM_001146088.2"/>
</dbReference>
<dbReference type="RefSeq" id="NP_062324.2">
    <property type="nucleotide sequence ID" value="NM_019451.2"/>
</dbReference>
<dbReference type="PDB" id="1MD6">
    <property type="method" value="X-ray"/>
    <property type="resolution" value="1.60 A"/>
    <property type="chains" value="A=3-156"/>
</dbReference>
<dbReference type="PDBsum" id="1MD6"/>
<dbReference type="SMR" id="Q9QYY1"/>
<dbReference type="FunCoup" id="Q9QYY1">
    <property type="interactions" value="608"/>
</dbReference>
<dbReference type="STRING" id="10090.ENSMUSP00000028360"/>
<dbReference type="PhosphoSitePlus" id="Q9QYY1"/>
<dbReference type="PaxDb" id="10090-ENSMUSP00000028360"/>
<dbReference type="ProteomicsDB" id="273302"/>
<dbReference type="Pumba" id="Q9QYY1"/>
<dbReference type="Antibodypedia" id="35211">
    <property type="antibodies" value="287 antibodies from 32 providers"/>
</dbReference>
<dbReference type="DNASU" id="54450"/>
<dbReference type="Ensembl" id="ENSMUST00000028360.8">
    <property type="protein sequence ID" value="ENSMUSP00000028360.2"/>
    <property type="gene ID" value="ENSMUSG00000026983.11"/>
</dbReference>
<dbReference type="Ensembl" id="ENSMUST00000114490.7">
    <property type="protein sequence ID" value="ENSMUSP00000110134.2"/>
    <property type="gene ID" value="ENSMUSG00000026983.11"/>
</dbReference>
<dbReference type="Ensembl" id="ENSMUST00000168941.8">
    <property type="protein sequence ID" value="ENSMUSP00000126028.2"/>
    <property type="gene ID" value="ENSMUSG00000026983.11"/>
</dbReference>
<dbReference type="GeneID" id="54450"/>
<dbReference type="KEGG" id="mmu:54450"/>
<dbReference type="UCSC" id="uc008ios.2">
    <property type="organism name" value="mouse"/>
</dbReference>
<dbReference type="AGR" id="MGI:1859325"/>
<dbReference type="CTD" id="26525"/>
<dbReference type="MGI" id="MGI:1859325">
    <property type="gene designation" value="Il36rn"/>
</dbReference>
<dbReference type="VEuPathDB" id="HostDB:ENSMUSG00000026983"/>
<dbReference type="eggNOG" id="ENOG502SRSC">
    <property type="taxonomic scope" value="Eukaryota"/>
</dbReference>
<dbReference type="GeneTree" id="ENSGT00950000182943"/>
<dbReference type="HOGENOM" id="CLU_095373_2_1_1"/>
<dbReference type="InParanoid" id="Q9QYY1"/>
<dbReference type="OMA" id="WDGEMKE"/>
<dbReference type="OrthoDB" id="9442925at2759"/>
<dbReference type="PhylomeDB" id="Q9QYY1"/>
<dbReference type="TreeFam" id="TF300203"/>
<dbReference type="Reactome" id="R-MMU-9014826">
    <property type="pathway name" value="Interleukin-36 pathway"/>
</dbReference>
<dbReference type="BioGRID-ORCS" id="54450">
    <property type="hits" value="3 hits in 78 CRISPR screens"/>
</dbReference>
<dbReference type="EvolutionaryTrace" id="Q9QYY1"/>
<dbReference type="PRO" id="PR:Q9QYY1"/>
<dbReference type="Proteomes" id="UP000000589">
    <property type="component" value="Chromosome 2"/>
</dbReference>
<dbReference type="RNAct" id="Q9QYY1">
    <property type="molecule type" value="protein"/>
</dbReference>
<dbReference type="Bgee" id="ENSMUSG00000026983">
    <property type="expression patterns" value="Expressed in lip and 37 other cell types or tissues"/>
</dbReference>
<dbReference type="ExpressionAtlas" id="Q9QYY1">
    <property type="expression patterns" value="baseline and differential"/>
</dbReference>
<dbReference type="GO" id="GO:0005737">
    <property type="term" value="C:cytoplasm"/>
    <property type="evidence" value="ECO:0007669"/>
    <property type="project" value="UniProtKB-SubCell"/>
</dbReference>
<dbReference type="GO" id="GO:0005615">
    <property type="term" value="C:extracellular space"/>
    <property type="evidence" value="ECO:0007669"/>
    <property type="project" value="UniProtKB-KW"/>
</dbReference>
<dbReference type="GO" id="GO:0005125">
    <property type="term" value="F:cytokine activity"/>
    <property type="evidence" value="ECO:0007669"/>
    <property type="project" value="UniProtKB-KW"/>
</dbReference>
<dbReference type="GO" id="GO:0005149">
    <property type="term" value="F:interleukin-1 receptor binding"/>
    <property type="evidence" value="ECO:0007669"/>
    <property type="project" value="InterPro"/>
</dbReference>
<dbReference type="GO" id="GO:0019732">
    <property type="term" value="P:antifungal humoral response"/>
    <property type="evidence" value="ECO:0007669"/>
    <property type="project" value="Ensembl"/>
</dbReference>
<dbReference type="GO" id="GO:0006954">
    <property type="term" value="P:inflammatory response"/>
    <property type="evidence" value="ECO:0007669"/>
    <property type="project" value="InterPro"/>
</dbReference>
<dbReference type="GO" id="GO:0045087">
    <property type="term" value="P:innate immune response"/>
    <property type="evidence" value="ECO:0007669"/>
    <property type="project" value="UniProtKB-KW"/>
</dbReference>
<dbReference type="GO" id="GO:0001960">
    <property type="term" value="P:negative regulation of cytokine-mediated signaling pathway"/>
    <property type="evidence" value="ECO:0007669"/>
    <property type="project" value="Ensembl"/>
</dbReference>
<dbReference type="GO" id="GO:0032700">
    <property type="term" value="P:negative regulation of interleukin-17 production"/>
    <property type="evidence" value="ECO:0007669"/>
    <property type="project" value="Ensembl"/>
</dbReference>
<dbReference type="GO" id="GO:0032715">
    <property type="term" value="P:negative regulation of interleukin-6 production"/>
    <property type="evidence" value="ECO:0000316"/>
    <property type="project" value="MGI"/>
</dbReference>
<dbReference type="GO" id="GO:0032689">
    <property type="term" value="P:negative regulation of type II interferon production"/>
    <property type="evidence" value="ECO:0007669"/>
    <property type="project" value="Ensembl"/>
</dbReference>
<dbReference type="CDD" id="cd23303">
    <property type="entry name" value="beta-trefoil_IL36RA"/>
    <property type="match status" value="1"/>
</dbReference>
<dbReference type="FunFam" id="2.80.10.50:FF:000013">
    <property type="entry name" value="Interleukin-1"/>
    <property type="match status" value="1"/>
</dbReference>
<dbReference type="Gene3D" id="2.80.10.50">
    <property type="match status" value="1"/>
</dbReference>
<dbReference type="InterPro" id="IPR020877">
    <property type="entry name" value="IL-1_CS"/>
</dbReference>
<dbReference type="InterPro" id="IPR000975">
    <property type="entry name" value="IL-1_fam"/>
</dbReference>
<dbReference type="InterPro" id="IPR003297">
    <property type="entry name" value="IL-1RA/IL-36"/>
</dbReference>
<dbReference type="InterPro" id="IPR008996">
    <property type="entry name" value="IL1/FGF"/>
</dbReference>
<dbReference type="PANTHER" id="PTHR10078">
    <property type="entry name" value="INTERLEUKIN-1 FAMILY MEMBER"/>
    <property type="match status" value="1"/>
</dbReference>
<dbReference type="PANTHER" id="PTHR10078:SF32">
    <property type="entry name" value="INTERLEUKIN-36 RECEPTOR ANTAGONIST PROTEIN"/>
    <property type="match status" value="1"/>
</dbReference>
<dbReference type="Pfam" id="PF00340">
    <property type="entry name" value="IL1"/>
    <property type="match status" value="1"/>
</dbReference>
<dbReference type="PRINTS" id="PR00264">
    <property type="entry name" value="INTERLEUKIN1"/>
</dbReference>
<dbReference type="PRINTS" id="PR01360">
    <property type="entry name" value="INTRLEUKIN1X"/>
</dbReference>
<dbReference type="SMART" id="SM00125">
    <property type="entry name" value="IL1"/>
    <property type="match status" value="1"/>
</dbReference>
<dbReference type="SUPFAM" id="SSF50353">
    <property type="entry name" value="Cytokine"/>
    <property type="match status" value="1"/>
</dbReference>
<dbReference type="PROSITE" id="PS00253">
    <property type="entry name" value="INTERLEUKIN_1"/>
    <property type="match status" value="1"/>
</dbReference>
<proteinExistence type="evidence at protein level"/>
<feature type="initiator methionine" description="Removed" evidence="6">
    <location>
        <position position="1"/>
    </location>
</feature>
<feature type="chain" id="PRO_0000153643" description="Interleukin-36 receptor antagonist protein">
    <location>
        <begin position="2"/>
        <end position="156"/>
    </location>
</feature>
<feature type="disulfide bond" evidence="2">
    <location>
        <begin position="9"/>
        <end position="155"/>
    </location>
</feature>
<feature type="sequence conflict" description="In Ref. 3; AAF69251." evidence="8" ref="3">
    <location>
        <position position="2"/>
    </location>
</feature>
<feature type="strand" evidence="10">
    <location>
        <begin position="8"/>
        <end position="14"/>
    </location>
</feature>
<feature type="strand" evidence="10">
    <location>
        <begin position="19"/>
        <end position="23"/>
    </location>
</feature>
<feature type="strand" evidence="10">
    <location>
        <begin position="26"/>
        <end position="29"/>
    </location>
</feature>
<feature type="helix" evidence="10">
    <location>
        <begin position="32"/>
        <end position="35"/>
    </location>
</feature>
<feature type="strand" evidence="10">
    <location>
        <begin position="43"/>
        <end position="47"/>
    </location>
</feature>
<feature type="helix" evidence="10">
    <location>
        <begin position="53"/>
        <end position="55"/>
    </location>
</feature>
<feature type="strand" evidence="10">
    <location>
        <begin position="57"/>
        <end position="62"/>
    </location>
</feature>
<feature type="turn" evidence="10">
    <location>
        <begin position="63"/>
        <end position="66"/>
    </location>
</feature>
<feature type="strand" evidence="10">
    <location>
        <begin position="67"/>
        <end position="70"/>
    </location>
</feature>
<feature type="strand" evidence="10">
    <location>
        <begin position="73"/>
        <end position="76"/>
    </location>
</feature>
<feature type="strand" evidence="10">
    <location>
        <begin position="80"/>
        <end position="83"/>
    </location>
</feature>
<feature type="helix" evidence="10">
    <location>
        <begin position="86"/>
        <end position="91"/>
    </location>
</feature>
<feature type="strand" evidence="10">
    <location>
        <begin position="92"/>
        <end position="94"/>
    </location>
</feature>
<feature type="helix" evidence="10">
    <location>
        <begin position="97"/>
        <end position="99"/>
    </location>
</feature>
<feature type="strand" evidence="10">
    <location>
        <begin position="100"/>
        <end position="105"/>
    </location>
</feature>
<feature type="strand" evidence="10">
    <location>
        <begin position="110"/>
        <end position="117"/>
    </location>
</feature>
<feature type="strand" evidence="10">
    <location>
        <begin position="121"/>
        <end position="124"/>
    </location>
</feature>
<feature type="strand" evidence="10">
    <location>
        <begin position="126"/>
        <end position="131"/>
    </location>
</feature>
<feature type="strand" evidence="10">
    <location>
        <begin position="133"/>
        <end position="135"/>
    </location>
</feature>
<feature type="strand" evidence="10">
    <location>
        <begin position="150"/>
        <end position="154"/>
    </location>
</feature>
<sequence length="156" mass="17136">MMVLSGALCFRMKDSALKVLYLHNNQLLAGGLHAEKVIKGEEISVVPNRALDASLSPVILGVQGGSQCLSCGTEKGPILKLEPVNIMELYLGAKESKSFTFYRRDMGLTSSFESAAYPGWFLCTSPEADQPVRLTQIPEDPAWDAPITDFYFQQCD</sequence>
<name>I36RA_MOUSE</name>
<gene>
    <name evidence="9" type="primary">Il36rn</name>
    <name type="synonym">Fil1d</name>
    <name evidence="9" type="synonym">Il1f5</name>
    <name type="synonym">Il1h3</name>
    <name type="synonym">Il1hy1</name>
</gene>
<comment type="function">
    <text evidence="3 4 5 6">Inhibits the activity of interleukin-36 (IL36A,IL36B and IL36G) by binding to receptor IL1RL2/IL-36R and preventing its association with the coreceptor IL1RAP for signaling. Part of the IL-36 signaling system that is thought to be present in epithelial barriers and to take part in local inflammatory response; similar to the IL-1 system with which it shares the coreceptor. Proposed to play a role in skin inflammation. May be involved in the innate immune response to fungal pathogens. May activate an anti-inflammatory signaling pathway by recruiting SIGIRR.</text>
</comment>
<comment type="subunit">
    <text evidence="1">Interacts with cargo receptor TMED10; the interaction mediates the translocation from the cytoplasm into the ERGIC (endoplasmic reticulum-Golgi intermediate compartment) and thereby secretion.</text>
</comment>
<comment type="subcellular location">
    <subcellularLocation>
        <location evidence="1">Cytoplasm</location>
    </subcellularLocation>
    <subcellularLocation>
        <location evidence="1">Secreted</location>
    </subcellularLocation>
    <text evidence="1">The secretion is dependent on protein unfolding and facilitated by the cargo receptor TMED10; it results in protein translocation from the cytoplasm into the ERGIC (endoplasmic reticulum-Golgi intermediate compartment) followed by vesicle entry and secretion.</text>
</comment>
<comment type="tissue specificity">
    <text>Highly abundant in embryonic tissue and tissues containing epithelial cells.</text>
</comment>
<comment type="PTM">
    <text evidence="6">Removal of N-terminal methionine is necessary for full antagonistic activity.</text>
</comment>
<comment type="disruption phenotype">
    <text evidence="3">In combination with transgenic IL36A exacerbates skin abnormalities (acanthosis, hyperkeratosis, presence of a mixed inflammatory cell infiltrate and increased cytokine and chemokine expression).</text>
</comment>
<comment type="miscellaneous">
    <text evidence="5">Bioactive (processed) recombinant IL36RN inhibits effects of IL-36 when used in 100- 1000-fold molar excess.</text>
</comment>
<comment type="similarity">
    <text evidence="8">Belongs to the IL-1 family.</text>
</comment>
<comment type="sequence caution" evidence="8">
    <conflict type="erroneous initiation">
        <sequence resource="EMBL-CDS" id="CAB59831"/>
    </conflict>
    <text>Truncated N-terminus.</text>
</comment>
<keyword id="KW-0002">3D-structure</keyword>
<keyword id="KW-0202">Cytokine</keyword>
<keyword id="KW-0963">Cytoplasm</keyword>
<keyword id="KW-1015">Disulfide bond</keyword>
<keyword id="KW-0391">Immunity</keyword>
<keyword id="KW-0399">Innate immunity</keyword>
<keyword id="KW-1185">Reference proteome</keyword>
<keyword id="KW-0964">Secreted</keyword>
<organism>
    <name type="scientific">Mus musculus</name>
    <name type="common">Mouse</name>
    <dbReference type="NCBI Taxonomy" id="10090"/>
    <lineage>
        <taxon>Eukaryota</taxon>
        <taxon>Metazoa</taxon>
        <taxon>Chordata</taxon>
        <taxon>Craniata</taxon>
        <taxon>Vertebrata</taxon>
        <taxon>Euteleostomi</taxon>
        <taxon>Mammalia</taxon>
        <taxon>Eutheria</taxon>
        <taxon>Euarchontoglires</taxon>
        <taxon>Glires</taxon>
        <taxon>Rodentia</taxon>
        <taxon>Myomorpha</taxon>
        <taxon>Muroidea</taxon>
        <taxon>Muridae</taxon>
        <taxon>Murinae</taxon>
        <taxon>Mus</taxon>
        <taxon>Mus</taxon>
    </lineage>
</organism>
<protein>
    <recommendedName>
        <fullName evidence="8">Interleukin-36 receptor antagonist protein</fullName>
        <shortName evidence="7">IL-36Ra</shortName>
    </recommendedName>
    <alternativeName>
        <fullName>Interleukin-1 HY1</fullName>
        <shortName>IL-1HY1</shortName>
    </alternativeName>
    <alternativeName>
        <fullName>Interleukin-1 delta</fullName>
        <shortName>IL-1 delta</shortName>
    </alternativeName>
    <alternativeName>
        <fullName>Interleukin-1 family member 5</fullName>
        <shortName>IL-1F5</shortName>
    </alternativeName>
    <alternativeName>
        <fullName>Interleukin-1 homolog 3</fullName>
        <shortName>IL-1H3</shortName>
    </alternativeName>
    <alternativeName>
        <fullName>Interleukin-1-like protein 1</fullName>
        <shortName>IL-1L1</shortName>
    </alternativeName>
</protein>
<reference key="1">
    <citation type="journal article" date="2000" name="Eur. J. Immunol.">
        <title>A tissue specific IL-1 receptor antagonist homolog from the IL-1 cluster lacks IL-1, IL-1ra, IL-18 and IL-18 antagonist activities.</title>
        <authorList>
            <person name="Barton J.L."/>
            <person name="Herbst R."/>
            <person name="Bosisio D."/>
            <person name="Higgins L."/>
            <person name="Nicklin M.J.H."/>
        </authorList>
    </citation>
    <scope>NUCLEOTIDE SEQUENCE [MRNA]</scope>
</reference>
<reference key="2">
    <citation type="journal article" date="2000" name="J. Biol. Chem.">
        <title>Identification and initial characterization of four novel members of the interleukin-1 family.</title>
        <authorList>
            <person name="Kumar S."/>
            <person name="McDonnell P.C."/>
            <person name="Lehr R."/>
            <person name="Tierney L."/>
            <person name="Tzimas M.N."/>
            <person name="Griswold D.E."/>
            <person name="Capper E.A."/>
            <person name="Tal-Singer R."/>
            <person name="Wells G.I."/>
            <person name="Doyle M.L."/>
            <person name="Young P.R."/>
        </authorList>
    </citation>
    <scope>NUCLEOTIDE SEQUENCE [MRNA]</scope>
</reference>
<reference key="3">
    <citation type="journal article" date="2001" name="J. Immunol.">
        <title>Two novel IL-1 family members, IL-1 delta and IL-1 epsilon, function as an antagonist and agonist of NF-kappa B activation through the orphan IL-1 receptor-related protein 2.</title>
        <authorList>
            <person name="Debets R."/>
            <person name="Timans J.C."/>
            <person name="Homey B."/>
            <person name="Zurawski S."/>
            <person name="Sana T.R."/>
            <person name="Lo S."/>
            <person name="Wagner J."/>
            <person name="Edwards G."/>
            <person name="Clifford T."/>
            <person name="Menon S."/>
            <person name="Bazan J.F."/>
            <person name="Kastelein R.A."/>
        </authorList>
    </citation>
    <scope>NUCLEOTIDE SEQUENCE [MRNA]</scope>
</reference>
<reference key="4">
    <citation type="journal article" date="2005" name="Science">
        <title>The transcriptional landscape of the mammalian genome.</title>
        <authorList>
            <person name="Carninci P."/>
            <person name="Kasukawa T."/>
            <person name="Katayama S."/>
            <person name="Gough J."/>
            <person name="Frith M.C."/>
            <person name="Maeda N."/>
            <person name="Oyama R."/>
            <person name="Ravasi T."/>
            <person name="Lenhard B."/>
            <person name="Wells C."/>
            <person name="Kodzius R."/>
            <person name="Shimokawa K."/>
            <person name="Bajic V.B."/>
            <person name="Brenner S.E."/>
            <person name="Batalov S."/>
            <person name="Forrest A.R."/>
            <person name="Zavolan M."/>
            <person name="Davis M.J."/>
            <person name="Wilming L.G."/>
            <person name="Aidinis V."/>
            <person name="Allen J.E."/>
            <person name="Ambesi-Impiombato A."/>
            <person name="Apweiler R."/>
            <person name="Aturaliya R.N."/>
            <person name="Bailey T.L."/>
            <person name="Bansal M."/>
            <person name="Baxter L."/>
            <person name="Beisel K.W."/>
            <person name="Bersano T."/>
            <person name="Bono H."/>
            <person name="Chalk A.M."/>
            <person name="Chiu K.P."/>
            <person name="Choudhary V."/>
            <person name="Christoffels A."/>
            <person name="Clutterbuck D.R."/>
            <person name="Crowe M.L."/>
            <person name="Dalla E."/>
            <person name="Dalrymple B.P."/>
            <person name="de Bono B."/>
            <person name="Della Gatta G."/>
            <person name="di Bernardo D."/>
            <person name="Down T."/>
            <person name="Engstrom P."/>
            <person name="Fagiolini M."/>
            <person name="Faulkner G."/>
            <person name="Fletcher C.F."/>
            <person name="Fukushima T."/>
            <person name="Furuno M."/>
            <person name="Futaki S."/>
            <person name="Gariboldi M."/>
            <person name="Georgii-Hemming P."/>
            <person name="Gingeras T.R."/>
            <person name="Gojobori T."/>
            <person name="Green R.E."/>
            <person name="Gustincich S."/>
            <person name="Harbers M."/>
            <person name="Hayashi Y."/>
            <person name="Hensch T.K."/>
            <person name="Hirokawa N."/>
            <person name="Hill D."/>
            <person name="Huminiecki L."/>
            <person name="Iacono M."/>
            <person name="Ikeo K."/>
            <person name="Iwama A."/>
            <person name="Ishikawa T."/>
            <person name="Jakt M."/>
            <person name="Kanapin A."/>
            <person name="Katoh M."/>
            <person name="Kawasawa Y."/>
            <person name="Kelso J."/>
            <person name="Kitamura H."/>
            <person name="Kitano H."/>
            <person name="Kollias G."/>
            <person name="Krishnan S.P."/>
            <person name="Kruger A."/>
            <person name="Kummerfeld S.K."/>
            <person name="Kurochkin I.V."/>
            <person name="Lareau L.F."/>
            <person name="Lazarevic D."/>
            <person name="Lipovich L."/>
            <person name="Liu J."/>
            <person name="Liuni S."/>
            <person name="McWilliam S."/>
            <person name="Madan Babu M."/>
            <person name="Madera M."/>
            <person name="Marchionni L."/>
            <person name="Matsuda H."/>
            <person name="Matsuzawa S."/>
            <person name="Miki H."/>
            <person name="Mignone F."/>
            <person name="Miyake S."/>
            <person name="Morris K."/>
            <person name="Mottagui-Tabar S."/>
            <person name="Mulder N."/>
            <person name="Nakano N."/>
            <person name="Nakauchi H."/>
            <person name="Ng P."/>
            <person name="Nilsson R."/>
            <person name="Nishiguchi S."/>
            <person name="Nishikawa S."/>
            <person name="Nori F."/>
            <person name="Ohara O."/>
            <person name="Okazaki Y."/>
            <person name="Orlando V."/>
            <person name="Pang K.C."/>
            <person name="Pavan W.J."/>
            <person name="Pavesi G."/>
            <person name="Pesole G."/>
            <person name="Petrovsky N."/>
            <person name="Piazza S."/>
            <person name="Reed J."/>
            <person name="Reid J.F."/>
            <person name="Ring B.Z."/>
            <person name="Ringwald M."/>
            <person name="Rost B."/>
            <person name="Ruan Y."/>
            <person name="Salzberg S.L."/>
            <person name="Sandelin A."/>
            <person name="Schneider C."/>
            <person name="Schoenbach C."/>
            <person name="Sekiguchi K."/>
            <person name="Semple C.A."/>
            <person name="Seno S."/>
            <person name="Sessa L."/>
            <person name="Sheng Y."/>
            <person name="Shibata Y."/>
            <person name="Shimada H."/>
            <person name="Shimada K."/>
            <person name="Silva D."/>
            <person name="Sinclair B."/>
            <person name="Sperling S."/>
            <person name="Stupka E."/>
            <person name="Sugiura K."/>
            <person name="Sultana R."/>
            <person name="Takenaka Y."/>
            <person name="Taki K."/>
            <person name="Tammoja K."/>
            <person name="Tan S.L."/>
            <person name="Tang S."/>
            <person name="Taylor M.S."/>
            <person name="Tegner J."/>
            <person name="Teichmann S.A."/>
            <person name="Ueda H.R."/>
            <person name="van Nimwegen E."/>
            <person name="Verardo R."/>
            <person name="Wei C.L."/>
            <person name="Yagi K."/>
            <person name="Yamanishi H."/>
            <person name="Zabarovsky E."/>
            <person name="Zhu S."/>
            <person name="Zimmer A."/>
            <person name="Hide W."/>
            <person name="Bult C."/>
            <person name="Grimmond S.M."/>
            <person name="Teasdale R.D."/>
            <person name="Liu E.T."/>
            <person name="Brusic V."/>
            <person name="Quackenbush J."/>
            <person name="Wahlestedt C."/>
            <person name="Mattick J.S."/>
            <person name="Hume D.A."/>
            <person name="Kai C."/>
            <person name="Sasaki D."/>
            <person name="Tomaru Y."/>
            <person name="Fukuda S."/>
            <person name="Kanamori-Katayama M."/>
            <person name="Suzuki M."/>
            <person name="Aoki J."/>
            <person name="Arakawa T."/>
            <person name="Iida J."/>
            <person name="Imamura K."/>
            <person name="Itoh M."/>
            <person name="Kato T."/>
            <person name="Kawaji H."/>
            <person name="Kawagashira N."/>
            <person name="Kawashima T."/>
            <person name="Kojima M."/>
            <person name="Kondo S."/>
            <person name="Konno H."/>
            <person name="Nakano K."/>
            <person name="Ninomiya N."/>
            <person name="Nishio T."/>
            <person name="Okada M."/>
            <person name="Plessy C."/>
            <person name="Shibata K."/>
            <person name="Shiraki T."/>
            <person name="Suzuki S."/>
            <person name="Tagami M."/>
            <person name="Waki K."/>
            <person name="Watahiki A."/>
            <person name="Okamura-Oho Y."/>
            <person name="Suzuki H."/>
            <person name="Kawai J."/>
            <person name="Hayashizaki Y."/>
        </authorList>
    </citation>
    <scope>NUCLEOTIDE SEQUENCE [LARGE SCALE MRNA]</scope>
    <source>
        <strain>C57BL/6J</strain>
        <tissue>Stomach</tissue>
        <tissue>Tongue</tissue>
    </source>
</reference>
<reference key="5">
    <citation type="journal article" date="2007" name="J. Exp. Med.">
        <title>Opposing activities of two novel members of the IL-1 ligand family regulate skin inflammation.</title>
        <authorList>
            <person name="Blumberg H."/>
            <person name="Dinh H."/>
            <person name="Trueblood E.S."/>
            <person name="Pretorius J."/>
            <person name="Kugler D."/>
            <person name="Weng N."/>
            <person name="Kanaly S.T."/>
            <person name="Towne J.E."/>
            <person name="Willis C.R."/>
            <person name="Kuechle M.K."/>
            <person name="Sims J.E."/>
            <person name="Peschon J.J."/>
        </authorList>
    </citation>
    <scope>FUNCTION</scope>
    <scope>DISRUPTION PHENOTYPE</scope>
</reference>
<reference key="6">
    <citation type="journal article" date="2008" name="J. Neurochem.">
        <title>IL-1F5 mediates anti-inflammatory activity in the brain through induction of IL-4 following interaction with SIGIRR/TIR8.</title>
        <authorList>
            <person name="Costelloe C."/>
            <person name="Watson M."/>
            <person name="Murphy A."/>
            <person name="McQuillan K."/>
            <person name="Loscher C."/>
            <person name="Armstrong M.E."/>
            <person name="Garlanda C."/>
            <person name="Mantovani A."/>
            <person name="O'Neill L.A."/>
            <person name="Mills K.H."/>
            <person name="Lynch M.A."/>
        </authorList>
    </citation>
    <scope>FUNCTION</scope>
</reference>
<reference key="7">
    <citation type="journal article" date="2011" name="Blood">
        <title>IL-36R ligands are potent regulators of dendritic and T cells.</title>
        <authorList>
            <person name="Vigne S."/>
            <person name="Palmer G."/>
            <person name="Lamacchia C."/>
            <person name="Martin P."/>
            <person name="Talabot-Ayer D."/>
            <person name="Rodriguez E."/>
            <person name="Ronchi F."/>
            <person name="Sallusto F."/>
            <person name="Dinh H."/>
            <person name="Sims J.E."/>
            <person name="Gabay C."/>
        </authorList>
    </citation>
    <scope>FUNCTION</scope>
</reference>
<reference key="8">
    <citation type="journal article" date="2011" name="J. Biol. Chem.">
        <title>Interleukin-36 (IL-36) ligands require processing for full agonist (IL-36alpha, IL-36beta, and IL-36gamma) or antagonist (IL-36Ra) activity.</title>
        <authorList>
            <person name="Towne J.E."/>
            <person name="Renshaw B.R."/>
            <person name="Douangpanya J."/>
            <person name="Lipsky B.P."/>
            <person name="Shen M."/>
            <person name="Gabel C.A."/>
            <person name="Sims J.E."/>
        </authorList>
    </citation>
    <scope>FUNCTION</scope>
    <scope>CLEAVAGE OF INITIATOR METHIONINE</scope>
</reference>
<reference key="9">
    <citation type="journal article" date="2003" name="Biochemistry">
        <title>High-resolution structure of murine interleukin 1 homologue IL-1F5 reveals unique loop conformations for receptor binding specificity.</title>
        <authorList>
            <person name="Dunn E.F."/>
            <person name="Gay N.J."/>
            <person name="Bristow A.F."/>
            <person name="Gearing D.P."/>
            <person name="O'Neill L.A.J."/>
            <person name="Pei X.Y."/>
        </authorList>
    </citation>
    <scope>X-RAY CRYSTALLOGRAPHY (1.6 ANGSTROMS) OF 3-156</scope>
    <scope>DISULFIDE BOND</scope>
</reference>
<evidence type="ECO:0000250" key="1">
    <source>
        <dbReference type="UniProtKB" id="Q9UBH0"/>
    </source>
</evidence>
<evidence type="ECO:0000269" key="2">
    <source>
    </source>
</evidence>
<evidence type="ECO:0000269" key="3">
    <source>
    </source>
</evidence>
<evidence type="ECO:0000269" key="4">
    <source>
    </source>
</evidence>
<evidence type="ECO:0000269" key="5">
    <source>
    </source>
</evidence>
<evidence type="ECO:0000269" key="6">
    <source>
    </source>
</evidence>
<evidence type="ECO:0000303" key="7">
    <source>
    </source>
</evidence>
<evidence type="ECO:0000305" key="8"/>
<evidence type="ECO:0000312" key="9">
    <source>
        <dbReference type="MGI" id="MGI:1859325"/>
    </source>
</evidence>
<evidence type="ECO:0007829" key="10">
    <source>
        <dbReference type="PDB" id="1MD6"/>
    </source>
</evidence>
<accession>Q9QYY1</accession>
<accession>Q9JIG2</accession>